<feature type="chain" id="PRO_0000096562" description="Phosphatidylglycerol lysyltransferase">
    <location>
        <begin position="1"/>
        <end position="840"/>
    </location>
</feature>
<feature type="topological domain" description="Cytoplasmic" evidence="2">
    <location>
        <begin position="1"/>
        <end position="8"/>
    </location>
</feature>
<feature type="transmembrane region" description="Helical" evidence="2">
    <location>
        <begin position="9"/>
        <end position="29"/>
    </location>
</feature>
<feature type="topological domain" description="Extracellular" evidence="2">
    <location>
        <begin position="30"/>
        <end position="52"/>
    </location>
</feature>
<feature type="transmembrane region" description="Helical" evidence="2">
    <location>
        <begin position="53"/>
        <end position="73"/>
    </location>
</feature>
<feature type="topological domain" description="Cytoplasmic" evidence="2">
    <location>
        <begin position="74"/>
        <end position="89"/>
    </location>
</feature>
<feature type="transmembrane region" description="Helical" evidence="2">
    <location>
        <begin position="90"/>
        <end position="110"/>
    </location>
</feature>
<feature type="topological domain" description="Extracellular" evidence="2">
    <location>
        <begin position="111"/>
        <end position="128"/>
    </location>
</feature>
<feature type="transmembrane region" description="Helical" evidence="2">
    <location>
        <begin position="129"/>
        <end position="149"/>
    </location>
</feature>
<feature type="topological domain" description="Cytoplasmic" evidence="2">
    <location>
        <begin position="150"/>
        <end position="161"/>
    </location>
</feature>
<feature type="transmembrane region" description="Helical" evidence="2">
    <location>
        <begin position="162"/>
        <end position="182"/>
    </location>
</feature>
<feature type="topological domain" description="Extracellular" evidence="2">
    <location>
        <begin position="183"/>
        <end position="200"/>
    </location>
</feature>
<feature type="transmembrane region" description="Helical" evidence="2">
    <location>
        <begin position="201"/>
        <end position="221"/>
    </location>
</feature>
<feature type="topological domain" description="Cytoplasmic" evidence="2">
    <location>
        <begin position="222"/>
        <end position="229"/>
    </location>
</feature>
<feature type="transmembrane region" description="Helical" evidence="2">
    <location>
        <begin position="230"/>
        <end position="250"/>
    </location>
</feature>
<feature type="topological domain" description="Extracellular" evidence="2">
    <location>
        <begin position="251"/>
        <end position="271"/>
    </location>
</feature>
<feature type="transmembrane region" description="Helical" evidence="2">
    <location>
        <begin position="272"/>
        <end position="292"/>
    </location>
</feature>
<feature type="topological domain" description="Cytoplasmic" evidence="2">
    <location>
        <begin position="293"/>
        <end position="337"/>
    </location>
</feature>
<feature type="transmembrane region" description="Helical" evidence="2">
    <location>
        <begin position="338"/>
        <end position="358"/>
    </location>
</feature>
<feature type="topological domain" description="Extracellular" evidence="2">
    <location>
        <begin position="359"/>
        <end position="369"/>
    </location>
</feature>
<feature type="transmembrane region" description="Helical" evidence="2">
    <location>
        <begin position="370"/>
        <end position="390"/>
    </location>
</feature>
<feature type="topological domain" description="Cytoplasmic" evidence="2">
    <location>
        <begin position="391"/>
        <end position="394"/>
    </location>
</feature>
<feature type="transmembrane region" description="Helical" evidence="2">
    <location>
        <begin position="395"/>
        <end position="415"/>
    </location>
</feature>
<feature type="transmembrane region" description="Helical" evidence="2">
    <location>
        <begin position="416"/>
        <end position="436"/>
    </location>
</feature>
<feature type="topological domain" description="Cytoplasmic" evidence="2">
    <location>
        <begin position="437"/>
        <end position="450"/>
    </location>
</feature>
<feature type="transmembrane region" description="Helical" evidence="2">
    <location>
        <begin position="451"/>
        <end position="471"/>
    </location>
</feature>
<feature type="topological domain" description="Extracellular" evidence="2">
    <location>
        <begin position="472"/>
        <end position="489"/>
    </location>
</feature>
<feature type="transmembrane region" description="Helical" evidence="2">
    <location>
        <begin position="490"/>
        <end position="510"/>
    </location>
</feature>
<feature type="topological domain" description="Cytoplasmic" evidence="2">
    <location>
        <begin position="511"/>
        <end position="840"/>
    </location>
</feature>
<name>MPRF_STAAR</name>
<keyword id="KW-0046">Antibiotic resistance</keyword>
<keyword id="KW-1003">Cell membrane</keyword>
<keyword id="KW-0443">Lipid metabolism</keyword>
<keyword id="KW-0472">Membrane</keyword>
<keyword id="KW-0808">Transferase</keyword>
<keyword id="KW-0812">Transmembrane</keyword>
<keyword id="KW-1133">Transmembrane helix</keyword>
<keyword id="KW-0843">Virulence</keyword>
<comment type="function">
    <text evidence="1">Catalyzes the transfer of a lysyl group from L-lysyl-tRNA(Lys) to membrane-bound phosphatidylglycerol (PG), which produces lysylphosphatidylglycerol (LPG), a major component of the bacterial membrane with a positive net charge. LPG synthesis contributes to bacterial virulence as it is involved in the resistance mechanism against cationic antimicrobial peptides (CAMP) produces by the host's immune system (defensins, cathelicidins) and by the competing microorganisms (bacteriocins). In fact, the modification of anionic phosphatidylglycerol with positively charged L-lysine results in repulsion of the peptides (By similarity).</text>
</comment>
<comment type="catalytic activity">
    <reaction>
        <text>L-lysyl-tRNA(Lys) + a 1,2-diacyl-sn-glycero-3-phospho-(1'-sn-glycerol) = a 1,2-diacyl-sn-glycero-3-phospho-1'-(3'-O-L-lysyl)-sn-glycerol + tRNA(Lys)</text>
        <dbReference type="Rhea" id="RHEA:10668"/>
        <dbReference type="Rhea" id="RHEA-COMP:9696"/>
        <dbReference type="Rhea" id="RHEA-COMP:9697"/>
        <dbReference type="ChEBI" id="CHEBI:64716"/>
        <dbReference type="ChEBI" id="CHEBI:75792"/>
        <dbReference type="ChEBI" id="CHEBI:78442"/>
        <dbReference type="ChEBI" id="CHEBI:78529"/>
        <dbReference type="EC" id="2.3.2.3"/>
    </reaction>
</comment>
<comment type="subcellular location">
    <subcellularLocation>
        <location>Cell membrane</location>
        <topology>Multi-pass membrane protein</topology>
    </subcellularLocation>
</comment>
<comment type="similarity">
    <text evidence="3">Belongs to the LPG synthase family.</text>
</comment>
<protein>
    <recommendedName>
        <fullName>Phosphatidylglycerol lysyltransferase</fullName>
        <ecNumber>2.3.2.3</ecNumber>
    </recommendedName>
    <alternativeName>
        <fullName>Lysylphosphatidylglycerol synthase</fullName>
        <shortName>LPG synthase</shortName>
    </alternativeName>
    <alternativeName>
        <fullName>Multiple peptide resistance factor</fullName>
    </alternativeName>
</protein>
<gene>
    <name type="primary">mprF</name>
    <name type="ordered locus">SAR1372</name>
</gene>
<organism>
    <name type="scientific">Staphylococcus aureus (strain MRSA252)</name>
    <dbReference type="NCBI Taxonomy" id="282458"/>
    <lineage>
        <taxon>Bacteria</taxon>
        <taxon>Bacillati</taxon>
        <taxon>Bacillota</taxon>
        <taxon>Bacilli</taxon>
        <taxon>Bacillales</taxon>
        <taxon>Staphylococcaceae</taxon>
        <taxon>Staphylococcus</taxon>
    </lineage>
</organism>
<sequence>MNQEVKNKIFSILKITFATALFIFVVITLYRELSGINFKDTLVEFSKINRMSLVLLFIGGGASLVILSMYDVILSRALKMDISLGKVLRVSYIINALNAIVGFGGFIGAGVRAMVYKNYTHDKKKLVHFISLILISMLTGLSLLSLLIVFHVFDASLILNKITWVRWVLYAVSLFLPLFIIYSMVRPPDKNNRYVGLYCTLVSCVEWLAAAVVLYFCGVIVDVHVSFMSFIAIFIIAALSGLVSFIPGGFGAFDLVVLLGFKTLGVPEEKVLLMLLLYRFAYYFVPVIIALILSSFEFGTSAKKYIEGSKYFIPAKDVTSFLMSYQKDIIAKIPSLSLAILVFFTSMIFFVNNLTIVYDALYDGNHLTYYLLLAIHTSACLLLLLNVVGIYKQSRRAIIYAMISIILIIVATLFTYASYILITWLVIIFALLIVAFRRARRLKRPIRMRNLVAMLLFSIFILYINHIFIAGTFYALDVYTIEMHTSVLKYYFWITILIIAIIVGAIAWLFDYQFSKVRISSNIEECEEIIDQYGGNYLSHLIYSGDKQFFTNEDKNAFLMYRYKASSLVVLGDPIGDENAFDELLEAFYNYAEYLGYDVIFYQVTDQHMPLYHNFGNQFFKLGEEAIIDLTQFSTSGKKRRGFRATLNKFDELNISFEIIEPPFSTEFINELQHVSDLWLDNRQEMHFSVGQFNETYLSKAPIGVMRNENNEVIAFCSLMPTYFNDAISVDLIRWLPELDLPLMDGLYLHMLLWSKEQGYTKFNMGMATLSNVGQLHYSYLRERLAGRVFEHFNGLYRFQGLRRYKSKYNPNWEPRFLVYRKDNSLWESLSKVMRVIRHK</sequence>
<proteinExistence type="inferred from homology"/>
<reference key="1">
    <citation type="journal article" date="2004" name="Proc. Natl. Acad. Sci. U.S.A.">
        <title>Complete genomes of two clinical Staphylococcus aureus strains: evidence for the rapid evolution of virulence and drug resistance.</title>
        <authorList>
            <person name="Holden M.T.G."/>
            <person name="Feil E.J."/>
            <person name="Lindsay J.A."/>
            <person name="Peacock S.J."/>
            <person name="Day N.P.J."/>
            <person name="Enright M.C."/>
            <person name="Foster T.J."/>
            <person name="Moore C.E."/>
            <person name="Hurst L."/>
            <person name="Atkin R."/>
            <person name="Barron A."/>
            <person name="Bason N."/>
            <person name="Bentley S.D."/>
            <person name="Chillingworth C."/>
            <person name="Chillingworth T."/>
            <person name="Churcher C."/>
            <person name="Clark L."/>
            <person name="Corton C."/>
            <person name="Cronin A."/>
            <person name="Doggett J."/>
            <person name="Dowd L."/>
            <person name="Feltwell T."/>
            <person name="Hance Z."/>
            <person name="Harris B."/>
            <person name="Hauser H."/>
            <person name="Holroyd S."/>
            <person name="Jagels K."/>
            <person name="James K.D."/>
            <person name="Lennard N."/>
            <person name="Line A."/>
            <person name="Mayes R."/>
            <person name="Moule S."/>
            <person name="Mungall K."/>
            <person name="Ormond D."/>
            <person name="Quail M.A."/>
            <person name="Rabbinowitsch E."/>
            <person name="Rutherford K.M."/>
            <person name="Sanders M."/>
            <person name="Sharp S."/>
            <person name="Simmonds M."/>
            <person name="Stevens K."/>
            <person name="Whitehead S."/>
            <person name="Barrell B.G."/>
            <person name="Spratt B.G."/>
            <person name="Parkhill J."/>
        </authorList>
    </citation>
    <scope>NUCLEOTIDE SEQUENCE [LARGE SCALE GENOMIC DNA]</scope>
    <source>
        <strain>MRSA252</strain>
    </source>
</reference>
<evidence type="ECO:0000250" key="1"/>
<evidence type="ECO:0000255" key="2"/>
<evidence type="ECO:0000305" key="3"/>
<dbReference type="EC" id="2.3.2.3"/>
<dbReference type="EMBL" id="BX571856">
    <property type="protein sequence ID" value="CAG40370.1"/>
    <property type="molecule type" value="Genomic_DNA"/>
</dbReference>
<dbReference type="RefSeq" id="WP_001071160.1">
    <property type="nucleotide sequence ID" value="NC_002952.2"/>
</dbReference>
<dbReference type="SMR" id="Q6GH45"/>
<dbReference type="KEGG" id="sar:SAR1372"/>
<dbReference type="HOGENOM" id="CLU_008255_7_1_9"/>
<dbReference type="Proteomes" id="UP000000596">
    <property type="component" value="Chromosome"/>
</dbReference>
<dbReference type="GO" id="GO:0005886">
    <property type="term" value="C:plasma membrane"/>
    <property type="evidence" value="ECO:0007669"/>
    <property type="project" value="UniProtKB-SubCell"/>
</dbReference>
<dbReference type="GO" id="GO:0050071">
    <property type="term" value="F:phosphatidylglycerol lysyltransferase activity"/>
    <property type="evidence" value="ECO:0007669"/>
    <property type="project" value="UniProtKB-EC"/>
</dbReference>
<dbReference type="GO" id="GO:0006629">
    <property type="term" value="P:lipid metabolic process"/>
    <property type="evidence" value="ECO:0007669"/>
    <property type="project" value="UniProtKB-KW"/>
</dbReference>
<dbReference type="GO" id="GO:0055091">
    <property type="term" value="P:phospholipid homeostasis"/>
    <property type="evidence" value="ECO:0007669"/>
    <property type="project" value="TreeGrafter"/>
</dbReference>
<dbReference type="GO" id="GO:0046677">
    <property type="term" value="P:response to antibiotic"/>
    <property type="evidence" value="ECO:0007669"/>
    <property type="project" value="UniProtKB-KW"/>
</dbReference>
<dbReference type="InterPro" id="IPR016181">
    <property type="entry name" value="Acyl_CoA_acyltransferase"/>
</dbReference>
<dbReference type="InterPro" id="IPR022791">
    <property type="entry name" value="L-PG_synthase/AglD"/>
</dbReference>
<dbReference type="InterPro" id="IPR024320">
    <property type="entry name" value="LPG_synthase_C"/>
</dbReference>
<dbReference type="InterPro" id="IPR051211">
    <property type="entry name" value="PG_lysyltransferase"/>
</dbReference>
<dbReference type="NCBIfam" id="NF033480">
    <property type="entry name" value="bifunc_MprF"/>
    <property type="match status" value="1"/>
</dbReference>
<dbReference type="NCBIfam" id="TIGR00374">
    <property type="entry name" value="flippase-like domain"/>
    <property type="match status" value="1"/>
</dbReference>
<dbReference type="PANTHER" id="PTHR34697">
    <property type="entry name" value="PHOSPHATIDYLGLYCEROL LYSYLTRANSFERASE"/>
    <property type="match status" value="1"/>
</dbReference>
<dbReference type="PANTHER" id="PTHR34697:SF2">
    <property type="entry name" value="PHOSPHATIDYLGLYCEROL LYSYLTRANSFERASE"/>
    <property type="match status" value="1"/>
</dbReference>
<dbReference type="Pfam" id="PF09924">
    <property type="entry name" value="LPG_synthase_C"/>
    <property type="match status" value="1"/>
</dbReference>
<dbReference type="Pfam" id="PF03706">
    <property type="entry name" value="LPG_synthase_TM"/>
    <property type="match status" value="1"/>
</dbReference>
<dbReference type="SUPFAM" id="SSF55729">
    <property type="entry name" value="Acyl-CoA N-acyltransferases (Nat)"/>
    <property type="match status" value="1"/>
</dbReference>
<accession>Q6GH45</accession>